<name>EGFB2_MOUSE</name>
<gene>
    <name type="primary">Egfbp2</name>
    <name type="synonym">Egfbp-2</name>
    <name type="synonym">Klk-13</name>
    <name type="synonym">Klk13</name>
</gene>
<evidence type="ECO:0000255" key="1">
    <source>
        <dbReference type="PROSITE-ProRule" id="PRU00274"/>
    </source>
</evidence>
<evidence type="ECO:0000269" key="2">
    <source>
    </source>
</evidence>
<evidence type="ECO:0000305" key="3"/>
<evidence type="ECO:0007829" key="4">
    <source>
        <dbReference type="PDB" id="1AO5"/>
    </source>
</evidence>
<proteinExistence type="evidence at protein level"/>
<sequence>MWFLILFLALSLGGIDAAPPLQSRVVGGFNCKKNSQPWQVAVYYQKEHICGGVLLDRNWVLTAAHCYVDQYEVWLGKNKLFQEEPSAQHRLVSKSFPHPGFNMSLLMLQTIPPGADFSNDLMLLRLSKPADITDVVKPIALPTKEPKPGSKCLASGWGSITPTRWQKPDDLQCVFITLLPNENCAKVYLQKVTDVMLCAGEMGGGKDTCRDDSGGPLICDGILQGTTSYGPVPCGKPGVPAIYTNLIKFNSWIKDTMMKNA</sequence>
<feature type="signal peptide" evidence="2">
    <location>
        <begin position="1"/>
        <end position="16"/>
    </location>
</feature>
<feature type="propeptide" id="PRO_0000027983" description="Activation peptide">
    <location>
        <begin position="17"/>
        <end position="24"/>
    </location>
</feature>
<feature type="chain" id="PRO_0000027984" description="Epidermal growth factor-binding protein type B">
    <location>
        <begin position="25"/>
        <end position="261"/>
    </location>
</feature>
<feature type="domain" description="Peptidase S1" evidence="1">
    <location>
        <begin position="25"/>
        <end position="258"/>
    </location>
</feature>
<feature type="active site" description="Charge relay system">
    <location>
        <position position="65"/>
    </location>
</feature>
<feature type="active site" description="Charge relay system">
    <location>
        <position position="120"/>
    </location>
</feature>
<feature type="active site" description="Charge relay system">
    <location>
        <position position="213"/>
    </location>
</feature>
<feature type="glycosylation site" description="N-linked (GlcNAc...) asparagine">
    <location>
        <position position="102"/>
    </location>
</feature>
<feature type="disulfide bond">
    <location>
        <begin position="31"/>
        <end position="173"/>
    </location>
</feature>
<feature type="disulfide bond">
    <location>
        <begin position="50"/>
        <end position="66"/>
    </location>
</feature>
<feature type="disulfide bond">
    <location>
        <begin position="152"/>
        <end position="219"/>
    </location>
</feature>
<feature type="disulfide bond">
    <location>
        <begin position="184"/>
        <end position="198"/>
    </location>
</feature>
<feature type="disulfide bond">
    <location>
        <begin position="209"/>
        <end position="234"/>
    </location>
</feature>
<feature type="sequence conflict" description="In Ref. 1." evidence="3" ref="1">
    <original>N</original>
    <variation>D</variation>
    <location>
        <position position="119"/>
    </location>
</feature>
<feature type="strand" evidence="4">
    <location>
        <begin position="39"/>
        <end position="44"/>
    </location>
</feature>
<feature type="strand" evidence="4">
    <location>
        <begin position="47"/>
        <end position="56"/>
    </location>
</feature>
<feature type="strand" evidence="4">
    <location>
        <begin position="59"/>
        <end position="62"/>
    </location>
</feature>
<feature type="strand" evidence="4">
    <location>
        <begin position="72"/>
        <end position="76"/>
    </location>
</feature>
<feature type="strand" evidence="4">
    <location>
        <begin position="79"/>
        <end position="82"/>
    </location>
</feature>
<feature type="strand" evidence="4">
    <location>
        <begin position="92"/>
        <end position="97"/>
    </location>
</feature>
<feature type="helix" evidence="4">
    <location>
        <begin position="103"/>
        <end position="107"/>
    </location>
</feature>
<feature type="strand" evidence="4">
    <location>
        <begin position="122"/>
        <end position="128"/>
    </location>
</feature>
<feature type="strand" evidence="4">
    <location>
        <begin position="134"/>
        <end position="136"/>
    </location>
</feature>
<feature type="strand" evidence="4">
    <location>
        <begin position="151"/>
        <end position="157"/>
    </location>
</feature>
<feature type="strand" evidence="4">
    <location>
        <begin position="172"/>
        <end position="179"/>
    </location>
</feature>
<feature type="helix" evidence="4">
    <location>
        <begin position="181"/>
        <end position="187"/>
    </location>
</feature>
<feature type="strand" evidence="4">
    <location>
        <begin position="196"/>
        <end position="200"/>
    </location>
</feature>
<feature type="strand" evidence="4">
    <location>
        <begin position="216"/>
        <end position="219"/>
    </location>
</feature>
<feature type="strand" evidence="4">
    <location>
        <begin position="222"/>
        <end position="229"/>
    </location>
</feature>
<feature type="strand" evidence="4">
    <location>
        <begin position="241"/>
        <end position="244"/>
    </location>
</feature>
<feature type="helix" evidence="4">
    <location>
        <begin position="246"/>
        <end position="249"/>
    </location>
</feature>
<feature type="helix" evidence="4">
    <location>
        <begin position="250"/>
        <end position="259"/>
    </location>
</feature>
<accession>P36368</accession>
<accession>P00754</accession>
<protein>
    <recommendedName>
        <fullName>Epidermal growth factor-binding protein type B</fullName>
        <shortName>EGF-BP B</shortName>
        <ecNumber>3.4.21.119</ecNumber>
    </recommendedName>
    <alternativeName>
        <fullName>Glandular kallikrein K13</fullName>
        <shortName>mGK-13</shortName>
    </alternativeName>
    <alternativeName>
        <fullName>Prorenin-converting enzyme 1</fullName>
        <shortName>PRECE-1</shortName>
    </alternativeName>
    <alternativeName>
        <fullName>Tissue kallikrein 13</fullName>
    </alternativeName>
</protein>
<dbReference type="EC" id="3.4.21.119"/>
<dbReference type="EMBL" id="M17982">
    <property type="protein sequence ID" value="AAA37680.1"/>
    <property type="molecule type" value="Genomic_DNA"/>
</dbReference>
<dbReference type="EMBL" id="M17980">
    <property type="protein sequence ID" value="AAA37680.1"/>
    <property type="status" value="JOINED"/>
    <property type="molecule type" value="Genomic_DNA"/>
</dbReference>
<dbReference type="EMBL" id="M17981">
    <property type="protein sequence ID" value="AAA37680.1"/>
    <property type="status" value="JOINED"/>
    <property type="molecule type" value="Genomic_DNA"/>
</dbReference>
<dbReference type="EMBL" id="X58628">
    <property type="protein sequence ID" value="CAA41482.1"/>
    <property type="molecule type" value="mRNA"/>
</dbReference>
<dbReference type="EMBL" id="M18612">
    <property type="protein sequence ID" value="AAA39354.1"/>
    <property type="molecule type" value="Genomic_DNA"/>
</dbReference>
<dbReference type="PIR" id="A41020">
    <property type="entry name" value="A41020"/>
</dbReference>
<dbReference type="RefSeq" id="NP_034245.3">
    <property type="nucleotide sequence ID" value="NM_010115.6"/>
</dbReference>
<dbReference type="PDB" id="1AO5">
    <property type="method" value="X-ray"/>
    <property type="resolution" value="2.60 A"/>
    <property type="chains" value="A/B=25-261"/>
</dbReference>
<dbReference type="PDBsum" id="1AO5"/>
<dbReference type="SMR" id="P36368"/>
<dbReference type="CORUM" id="P36368"/>
<dbReference type="FunCoup" id="P36368">
    <property type="interactions" value="104"/>
</dbReference>
<dbReference type="MEROPS" id="S01.173"/>
<dbReference type="GlyCosmos" id="P36368">
    <property type="glycosylation" value="1 site, No reported glycans"/>
</dbReference>
<dbReference type="GlyGen" id="P36368">
    <property type="glycosylation" value="2 sites"/>
</dbReference>
<dbReference type="iPTMnet" id="P36368"/>
<dbReference type="PhosphoSitePlus" id="P36368"/>
<dbReference type="ProteomicsDB" id="277557"/>
<dbReference type="DNASU" id="13647"/>
<dbReference type="GeneID" id="13647"/>
<dbReference type="KEGG" id="mmu:13647"/>
<dbReference type="AGR" id="MGI:95292"/>
<dbReference type="CTD" id="13647"/>
<dbReference type="MGI" id="MGI:95292">
    <property type="gene designation" value="Egfbp2"/>
</dbReference>
<dbReference type="InParanoid" id="P36368"/>
<dbReference type="PhylomeDB" id="P36368"/>
<dbReference type="BRENDA" id="3.4.21.119">
    <property type="organism ID" value="3474"/>
</dbReference>
<dbReference type="BioGRID-ORCS" id="13647">
    <property type="hits" value="2 hits in 12 CRISPR screens"/>
</dbReference>
<dbReference type="EvolutionaryTrace" id="P36368"/>
<dbReference type="PRO" id="PR:P36368"/>
<dbReference type="Proteomes" id="UP000000589">
    <property type="component" value="Unplaced"/>
</dbReference>
<dbReference type="RNAct" id="P36368">
    <property type="molecule type" value="protein"/>
</dbReference>
<dbReference type="GO" id="GO:0005615">
    <property type="term" value="C:extracellular space"/>
    <property type="evidence" value="ECO:0000314"/>
    <property type="project" value="MGI"/>
</dbReference>
<dbReference type="GO" id="GO:0008233">
    <property type="term" value="F:peptidase activity"/>
    <property type="evidence" value="ECO:0000314"/>
    <property type="project" value="MGI"/>
</dbReference>
<dbReference type="GO" id="GO:0004252">
    <property type="term" value="F:serine-type endopeptidase activity"/>
    <property type="evidence" value="ECO:0007669"/>
    <property type="project" value="InterPro"/>
</dbReference>
<dbReference type="GO" id="GO:0031638">
    <property type="term" value="P:zymogen activation"/>
    <property type="evidence" value="ECO:0000314"/>
    <property type="project" value="MGI"/>
</dbReference>
<dbReference type="CDD" id="cd00190">
    <property type="entry name" value="Tryp_SPc"/>
    <property type="match status" value="1"/>
</dbReference>
<dbReference type="FunFam" id="2.40.10.10:FF:000032">
    <property type="entry name" value="Kallikrein 1-related peptidase C9"/>
    <property type="match status" value="1"/>
</dbReference>
<dbReference type="FunFam" id="2.40.10.10:FF:000042">
    <property type="entry name" value="Kallikrein 1-related peptidase C9"/>
    <property type="match status" value="1"/>
</dbReference>
<dbReference type="Gene3D" id="2.40.10.10">
    <property type="entry name" value="Trypsin-like serine proteases"/>
    <property type="match status" value="2"/>
</dbReference>
<dbReference type="InterPro" id="IPR009003">
    <property type="entry name" value="Peptidase_S1_PA"/>
</dbReference>
<dbReference type="InterPro" id="IPR043504">
    <property type="entry name" value="Peptidase_S1_PA_chymotrypsin"/>
</dbReference>
<dbReference type="InterPro" id="IPR001314">
    <property type="entry name" value="Peptidase_S1A"/>
</dbReference>
<dbReference type="InterPro" id="IPR001254">
    <property type="entry name" value="Trypsin_dom"/>
</dbReference>
<dbReference type="InterPro" id="IPR018114">
    <property type="entry name" value="TRYPSIN_HIS"/>
</dbReference>
<dbReference type="PANTHER" id="PTHR24271:SF47">
    <property type="entry name" value="KALLIKREIN-1"/>
    <property type="match status" value="1"/>
</dbReference>
<dbReference type="PANTHER" id="PTHR24271">
    <property type="entry name" value="KALLIKREIN-RELATED"/>
    <property type="match status" value="1"/>
</dbReference>
<dbReference type="Pfam" id="PF00089">
    <property type="entry name" value="Trypsin"/>
    <property type="match status" value="1"/>
</dbReference>
<dbReference type="PRINTS" id="PR00722">
    <property type="entry name" value="CHYMOTRYPSIN"/>
</dbReference>
<dbReference type="SMART" id="SM00020">
    <property type="entry name" value="Tryp_SPc"/>
    <property type="match status" value="1"/>
</dbReference>
<dbReference type="SUPFAM" id="SSF50494">
    <property type="entry name" value="Trypsin-like serine proteases"/>
    <property type="match status" value="1"/>
</dbReference>
<dbReference type="PROSITE" id="PS50240">
    <property type="entry name" value="TRYPSIN_DOM"/>
    <property type="match status" value="1"/>
</dbReference>
<dbReference type="PROSITE" id="PS00134">
    <property type="entry name" value="TRYPSIN_HIS"/>
    <property type="match status" value="1"/>
</dbReference>
<organism>
    <name type="scientific">Mus musculus</name>
    <name type="common">Mouse</name>
    <dbReference type="NCBI Taxonomy" id="10090"/>
    <lineage>
        <taxon>Eukaryota</taxon>
        <taxon>Metazoa</taxon>
        <taxon>Chordata</taxon>
        <taxon>Craniata</taxon>
        <taxon>Vertebrata</taxon>
        <taxon>Euteleostomi</taxon>
        <taxon>Mammalia</taxon>
        <taxon>Eutheria</taxon>
        <taxon>Euarchontoglires</taxon>
        <taxon>Glires</taxon>
        <taxon>Rodentia</taxon>
        <taxon>Myomorpha</taxon>
        <taxon>Muroidea</taxon>
        <taxon>Muridae</taxon>
        <taxon>Murinae</taxon>
        <taxon>Mus</taxon>
        <taxon>Mus</taxon>
    </lineage>
</organism>
<reference key="1">
    <citation type="journal article" date="1987" name="Biochemistry">
        <title>Mouse glandular kallikrein genes: identification and characterization of the genes encoding the epidermal growth factor binding proteins.</title>
        <authorList>
            <person name="Drinkwater C.C."/>
            <person name="Evans B.A."/>
            <person name="Richards R.I."/>
        </authorList>
    </citation>
    <scope>NUCLEOTIDE SEQUENCE [GENOMIC DNA]</scope>
    <source>
        <strain>BALB/cJ</strain>
        <tissue>Salivary gland</tissue>
    </source>
</reference>
<reference key="2">
    <citation type="journal article" date="1991" name="J. Biol. Chem.">
        <title>Mouse submandibular gland prorenin-converting enzyme is a member of glandular kallikrein family.</title>
        <authorList>
            <person name="Kim W.S."/>
            <person name="Nakayama K."/>
            <person name="Nakagawa T."/>
            <person name="Kawamura Y."/>
            <person name="Haraguchi K."/>
            <person name="Murakami K."/>
        </authorList>
    </citation>
    <scope>NUCLEOTIDE SEQUENCE [MRNA]</scope>
    <source>
        <strain>ICR</strain>
        <tissue>Submandibular gland</tissue>
    </source>
</reference>
<reference key="3">
    <citation type="journal article" date="1987" name="J. Biol. Chem.">
        <title>Mouse glandular kallikrein genes. Structure and partial sequence analysis of the kallikrein gene locus.</title>
        <authorList>
            <person name="Evans B.A."/>
            <person name="Drinkwater C.C."/>
            <person name="Richards R.I."/>
        </authorList>
    </citation>
    <scope>PROTEIN SEQUENCE OF 17-54</scope>
    <scope>NUCLEOTIDE SEQUENCE OF 70-122</scope>
</reference>
<reference key="4">
    <citation type="journal article" date="1997" name="Protein Sci.">
        <title>The crystal structure of the mouse glandular kallikrein-13 (prorenin converting enzyme).</title>
        <authorList>
            <person name="Timm D.E."/>
        </authorList>
    </citation>
    <scope>X-RAY CRYSTALLOGRAPHY (2.6 ANGSTROMS)</scope>
</reference>
<comment type="function">
    <text>Cleaves REN2 at a dibasic site to yield mature renin.</text>
</comment>
<comment type="catalytic activity">
    <reaction>
        <text>Hydrolyzes mouse Ren2 protein (a species of prorenin present in the submandibular gland) on the carboxy side of the arginine residue at the Lys-Arg-|- pair in the N-terminus, to yield mature renin.</text>
        <dbReference type="EC" id="3.4.21.119"/>
    </reaction>
</comment>
<comment type="similarity">
    <text evidence="1">Belongs to the peptidase S1 family. Kallikrein subfamily.</text>
</comment>
<keyword id="KW-0002">3D-structure</keyword>
<keyword id="KW-0903">Direct protein sequencing</keyword>
<keyword id="KW-1015">Disulfide bond</keyword>
<keyword id="KW-0325">Glycoprotein</keyword>
<keyword id="KW-0378">Hydrolase</keyword>
<keyword id="KW-0645">Protease</keyword>
<keyword id="KW-1185">Reference proteome</keyword>
<keyword id="KW-0720">Serine protease</keyword>
<keyword id="KW-0732">Signal</keyword>
<keyword id="KW-0865">Zymogen</keyword>